<sequence>MQLSPQEKDKLLIFTAFLVAERRKNKGLKLNYPEAVAYISGLILEGAREGKLVAELMSEGQTWLTRDDVMAGVAEMVDEVQVEATFPDGTKLVTIHNPIQ</sequence>
<accession>B1XLM3</accession>
<reference key="1">
    <citation type="submission" date="2008-02" db="EMBL/GenBank/DDBJ databases">
        <title>Complete sequence of Synechococcus sp. PCC 7002.</title>
        <authorList>
            <person name="Li T."/>
            <person name="Zhao J."/>
            <person name="Zhao C."/>
            <person name="Liu Z."/>
            <person name="Zhao F."/>
            <person name="Marquardt J."/>
            <person name="Nomura C.T."/>
            <person name="Persson S."/>
            <person name="Detter J.C."/>
            <person name="Richardson P.M."/>
            <person name="Lanz C."/>
            <person name="Schuster S.C."/>
            <person name="Wang J."/>
            <person name="Li S."/>
            <person name="Huang X."/>
            <person name="Cai T."/>
            <person name="Yu Z."/>
            <person name="Luo J."/>
            <person name="Zhao J."/>
            <person name="Bryant D.A."/>
        </authorList>
    </citation>
    <scope>NUCLEOTIDE SEQUENCE [LARGE SCALE GENOMIC DNA]</scope>
    <source>
        <strain>ATCC 27264 / PCC 7002 / PR-6</strain>
    </source>
</reference>
<keyword id="KW-0963">Cytoplasm</keyword>
<keyword id="KW-0378">Hydrolase</keyword>
<keyword id="KW-1185">Reference proteome</keyword>
<evidence type="ECO:0000255" key="1">
    <source>
        <dbReference type="HAMAP-Rule" id="MF_00739"/>
    </source>
</evidence>
<dbReference type="EC" id="3.5.1.5" evidence="1"/>
<dbReference type="EMBL" id="CP000951">
    <property type="protein sequence ID" value="ACA99316.1"/>
    <property type="molecule type" value="Genomic_DNA"/>
</dbReference>
<dbReference type="RefSeq" id="WP_012306939.1">
    <property type="nucleotide sequence ID" value="NZ_JAHHPU010000001.1"/>
</dbReference>
<dbReference type="SMR" id="B1XLM3"/>
<dbReference type="STRING" id="32049.SYNPCC7002_A1319"/>
<dbReference type="KEGG" id="syp:SYNPCC7002_A1319"/>
<dbReference type="eggNOG" id="COG0831">
    <property type="taxonomic scope" value="Bacteria"/>
</dbReference>
<dbReference type="HOGENOM" id="CLU_145825_1_0_3"/>
<dbReference type="UniPathway" id="UPA00258">
    <property type="reaction ID" value="UER00370"/>
</dbReference>
<dbReference type="Proteomes" id="UP000001688">
    <property type="component" value="Chromosome"/>
</dbReference>
<dbReference type="GO" id="GO:0005737">
    <property type="term" value="C:cytoplasm"/>
    <property type="evidence" value="ECO:0007669"/>
    <property type="project" value="UniProtKB-SubCell"/>
</dbReference>
<dbReference type="GO" id="GO:0016151">
    <property type="term" value="F:nickel cation binding"/>
    <property type="evidence" value="ECO:0007669"/>
    <property type="project" value="InterPro"/>
</dbReference>
<dbReference type="GO" id="GO:0009039">
    <property type="term" value="F:urease activity"/>
    <property type="evidence" value="ECO:0007669"/>
    <property type="project" value="UniProtKB-UniRule"/>
</dbReference>
<dbReference type="GO" id="GO:0043419">
    <property type="term" value="P:urea catabolic process"/>
    <property type="evidence" value="ECO:0007669"/>
    <property type="project" value="UniProtKB-UniRule"/>
</dbReference>
<dbReference type="CDD" id="cd00390">
    <property type="entry name" value="Urease_gamma"/>
    <property type="match status" value="1"/>
</dbReference>
<dbReference type="Gene3D" id="3.30.280.10">
    <property type="entry name" value="Urease, gamma-like subunit"/>
    <property type="match status" value="1"/>
</dbReference>
<dbReference type="HAMAP" id="MF_00739">
    <property type="entry name" value="Urease_gamma"/>
    <property type="match status" value="1"/>
</dbReference>
<dbReference type="InterPro" id="IPR012010">
    <property type="entry name" value="Urease_gamma"/>
</dbReference>
<dbReference type="InterPro" id="IPR002026">
    <property type="entry name" value="Urease_gamma/gamma-beta_su"/>
</dbReference>
<dbReference type="InterPro" id="IPR036463">
    <property type="entry name" value="Urease_gamma_sf"/>
</dbReference>
<dbReference type="InterPro" id="IPR050069">
    <property type="entry name" value="Urease_subunit"/>
</dbReference>
<dbReference type="NCBIfam" id="NF009712">
    <property type="entry name" value="PRK13241.1"/>
    <property type="match status" value="1"/>
</dbReference>
<dbReference type="NCBIfam" id="TIGR00193">
    <property type="entry name" value="urease_gam"/>
    <property type="match status" value="1"/>
</dbReference>
<dbReference type="PANTHER" id="PTHR33569">
    <property type="entry name" value="UREASE"/>
    <property type="match status" value="1"/>
</dbReference>
<dbReference type="PANTHER" id="PTHR33569:SF1">
    <property type="entry name" value="UREASE"/>
    <property type="match status" value="1"/>
</dbReference>
<dbReference type="Pfam" id="PF00547">
    <property type="entry name" value="Urease_gamma"/>
    <property type="match status" value="1"/>
</dbReference>
<dbReference type="PIRSF" id="PIRSF001223">
    <property type="entry name" value="Urease_gamma"/>
    <property type="match status" value="1"/>
</dbReference>
<dbReference type="SUPFAM" id="SSF54111">
    <property type="entry name" value="Urease, gamma-subunit"/>
    <property type="match status" value="1"/>
</dbReference>
<comment type="catalytic activity">
    <reaction evidence="1">
        <text>urea + 2 H2O + H(+) = hydrogencarbonate + 2 NH4(+)</text>
        <dbReference type="Rhea" id="RHEA:20557"/>
        <dbReference type="ChEBI" id="CHEBI:15377"/>
        <dbReference type="ChEBI" id="CHEBI:15378"/>
        <dbReference type="ChEBI" id="CHEBI:16199"/>
        <dbReference type="ChEBI" id="CHEBI:17544"/>
        <dbReference type="ChEBI" id="CHEBI:28938"/>
        <dbReference type="EC" id="3.5.1.5"/>
    </reaction>
</comment>
<comment type="pathway">
    <text evidence="1">Nitrogen metabolism; urea degradation; CO(2) and NH(3) from urea (urease route): step 1/1.</text>
</comment>
<comment type="subunit">
    <text evidence="1">Heterotrimer of UreA (gamma), UreB (beta) and UreC (alpha) subunits. Three heterotrimers associate to form the active enzyme.</text>
</comment>
<comment type="subcellular location">
    <subcellularLocation>
        <location evidence="1">Cytoplasm</location>
    </subcellularLocation>
</comment>
<comment type="similarity">
    <text evidence="1">Belongs to the urease gamma subunit family.</text>
</comment>
<organism>
    <name type="scientific">Picosynechococcus sp. (strain ATCC 27264 / PCC 7002 / PR-6)</name>
    <name type="common">Agmenellum quadruplicatum</name>
    <dbReference type="NCBI Taxonomy" id="32049"/>
    <lineage>
        <taxon>Bacteria</taxon>
        <taxon>Bacillati</taxon>
        <taxon>Cyanobacteriota</taxon>
        <taxon>Cyanophyceae</taxon>
        <taxon>Oscillatoriophycideae</taxon>
        <taxon>Chroococcales</taxon>
        <taxon>Geminocystaceae</taxon>
        <taxon>Picosynechococcus</taxon>
    </lineage>
</organism>
<proteinExistence type="inferred from homology"/>
<gene>
    <name evidence="1" type="primary">ureA</name>
    <name type="ordered locus">SYNPCC7002_A1319</name>
</gene>
<feature type="chain" id="PRO_1000199886" description="Urease subunit gamma">
    <location>
        <begin position="1"/>
        <end position="100"/>
    </location>
</feature>
<protein>
    <recommendedName>
        <fullName evidence="1">Urease subunit gamma</fullName>
        <ecNumber evidence="1">3.5.1.5</ecNumber>
    </recommendedName>
    <alternativeName>
        <fullName evidence="1">Urea amidohydrolase subunit gamma</fullName>
    </alternativeName>
</protein>
<name>URE3_PICP2</name>